<organism>
    <name type="scientific">Bos taurus</name>
    <name type="common">Bovine</name>
    <dbReference type="NCBI Taxonomy" id="9913"/>
    <lineage>
        <taxon>Eukaryota</taxon>
        <taxon>Metazoa</taxon>
        <taxon>Chordata</taxon>
        <taxon>Craniata</taxon>
        <taxon>Vertebrata</taxon>
        <taxon>Euteleostomi</taxon>
        <taxon>Mammalia</taxon>
        <taxon>Eutheria</taxon>
        <taxon>Laurasiatheria</taxon>
        <taxon>Artiodactyla</taxon>
        <taxon>Ruminantia</taxon>
        <taxon>Pecora</taxon>
        <taxon>Bovidae</taxon>
        <taxon>Bovinae</taxon>
        <taxon>Bos</taxon>
    </lineage>
</organism>
<name>NECP1_BOVIN</name>
<proteinExistence type="evidence at transcript level"/>
<feature type="chain" id="PRO_0000283722" description="Adaptin ear-binding coat-associated protein 1">
    <location>
        <begin position="1"/>
        <end position="275"/>
    </location>
</feature>
<feature type="region of interest" description="Disordered" evidence="3">
    <location>
        <begin position="166"/>
        <end position="190"/>
    </location>
</feature>
<feature type="region of interest" description="Disordered" evidence="3">
    <location>
        <begin position="215"/>
        <end position="275"/>
    </location>
</feature>
<feature type="short sequence motif" description="WXXF motif 1">
    <location>
        <begin position="252"/>
        <end position="255"/>
    </location>
</feature>
<feature type="short sequence motif" description="WXXF motif 2">
    <location>
        <begin position="272"/>
        <end position="275"/>
    </location>
</feature>
<feature type="compositionally biased region" description="Low complexity" evidence="3">
    <location>
        <begin position="167"/>
        <end position="179"/>
    </location>
</feature>
<feature type="compositionally biased region" description="Polar residues" evidence="3">
    <location>
        <begin position="256"/>
        <end position="275"/>
    </location>
</feature>
<feature type="modified residue" description="Phosphothreonine" evidence="2">
    <location>
        <position position="211"/>
    </location>
</feature>
<reference key="1">
    <citation type="submission" date="2007-06" db="EMBL/GenBank/DDBJ databases">
        <authorList>
            <consortium name="NIH - Mammalian Gene Collection (MGC) project"/>
        </authorList>
    </citation>
    <scope>NUCLEOTIDE SEQUENCE [LARGE SCALE MRNA]</scope>
    <source>
        <strain>Crossbred X Angus</strain>
        <strain>Hereford</strain>
        <tissue>Fetal pons</tissue>
        <tissue>Ileum</tissue>
    </source>
</reference>
<gene>
    <name type="primary">NECAP1</name>
</gene>
<dbReference type="EMBL" id="BC102498">
    <property type="protein sequence ID" value="AAI02499.1"/>
    <property type="molecule type" value="mRNA"/>
</dbReference>
<dbReference type="EMBL" id="BC142418">
    <property type="protein sequence ID" value="AAI42419.1"/>
    <property type="molecule type" value="mRNA"/>
</dbReference>
<dbReference type="RefSeq" id="NP_001029383.1">
    <property type="nucleotide sequence ID" value="NM_001034211.1"/>
</dbReference>
<dbReference type="SMR" id="Q3T093"/>
<dbReference type="FunCoup" id="Q3T093">
    <property type="interactions" value="3332"/>
</dbReference>
<dbReference type="STRING" id="9913.ENSBTAP00000026951"/>
<dbReference type="PaxDb" id="9913-ENSBTAP00000026951"/>
<dbReference type="Ensembl" id="ENSBTAT00000026951.6">
    <property type="protein sequence ID" value="ENSBTAP00000026951.4"/>
    <property type="gene ID" value="ENSBTAG00000020237.7"/>
</dbReference>
<dbReference type="GeneID" id="504449"/>
<dbReference type="KEGG" id="bta:504449"/>
<dbReference type="CTD" id="25977"/>
<dbReference type="VEuPathDB" id="HostDB:ENSBTAG00000020237"/>
<dbReference type="VGNC" id="VGNC:31980">
    <property type="gene designation" value="NECAP1"/>
</dbReference>
<dbReference type="eggNOG" id="KOG2500">
    <property type="taxonomic scope" value="Eukaryota"/>
</dbReference>
<dbReference type="GeneTree" id="ENSGT00390000009359"/>
<dbReference type="HOGENOM" id="CLU_069884_1_1_1"/>
<dbReference type="InParanoid" id="Q3T093"/>
<dbReference type="OMA" id="LTTNRGH"/>
<dbReference type="OrthoDB" id="10265489at2759"/>
<dbReference type="TreeFam" id="TF314482"/>
<dbReference type="Reactome" id="R-BTA-432722">
    <property type="pathway name" value="Golgi Associated Vesicle Biogenesis"/>
</dbReference>
<dbReference type="Reactome" id="R-BTA-8856825">
    <property type="pathway name" value="Cargo recognition for clathrin-mediated endocytosis"/>
</dbReference>
<dbReference type="Reactome" id="R-BTA-8856828">
    <property type="pathway name" value="Clathrin-mediated endocytosis"/>
</dbReference>
<dbReference type="Proteomes" id="UP000009136">
    <property type="component" value="Chromosome 5"/>
</dbReference>
<dbReference type="Bgee" id="ENSBTAG00000020237">
    <property type="expression patterns" value="Expressed in adenohypophysis and 103 other cell types or tissues"/>
</dbReference>
<dbReference type="GO" id="GO:0030125">
    <property type="term" value="C:clathrin vesicle coat"/>
    <property type="evidence" value="ECO:0000318"/>
    <property type="project" value="GO_Central"/>
</dbReference>
<dbReference type="GO" id="GO:0005905">
    <property type="term" value="C:clathrin-coated pit"/>
    <property type="evidence" value="ECO:0007669"/>
    <property type="project" value="Ensembl"/>
</dbReference>
<dbReference type="GO" id="GO:0005886">
    <property type="term" value="C:plasma membrane"/>
    <property type="evidence" value="ECO:0007669"/>
    <property type="project" value="UniProtKB-SubCell"/>
</dbReference>
<dbReference type="GO" id="GO:0006897">
    <property type="term" value="P:endocytosis"/>
    <property type="evidence" value="ECO:0007669"/>
    <property type="project" value="UniProtKB-KW"/>
</dbReference>
<dbReference type="GO" id="GO:0015031">
    <property type="term" value="P:protein transport"/>
    <property type="evidence" value="ECO:0007669"/>
    <property type="project" value="UniProtKB-KW"/>
</dbReference>
<dbReference type="GO" id="GO:0016192">
    <property type="term" value="P:vesicle-mediated transport"/>
    <property type="evidence" value="ECO:0000318"/>
    <property type="project" value="GO_Central"/>
</dbReference>
<dbReference type="CDD" id="cd13228">
    <property type="entry name" value="PHear_NECAP"/>
    <property type="match status" value="1"/>
</dbReference>
<dbReference type="FunFam" id="2.30.29.30:FF:000064">
    <property type="entry name" value="Adaptin ear-binding coat-associated protein 1"/>
    <property type="match status" value="1"/>
</dbReference>
<dbReference type="Gene3D" id="2.30.29.30">
    <property type="entry name" value="Pleckstrin-homology domain (PH domain)/Phosphotyrosine-binding domain (PTB)"/>
    <property type="match status" value="1"/>
</dbReference>
<dbReference type="InterPro" id="IPR012466">
    <property type="entry name" value="NECAP_PHear"/>
</dbReference>
<dbReference type="InterPro" id="IPR011993">
    <property type="entry name" value="PH-like_dom_sf"/>
</dbReference>
<dbReference type="PANTHER" id="PTHR12847:SF15">
    <property type="entry name" value="ADAPTIN EAR-BINDING COAT-ASSOCIATED PROTEIN 1"/>
    <property type="match status" value="1"/>
</dbReference>
<dbReference type="PANTHER" id="PTHR12847">
    <property type="entry name" value="ATP-BINDING CASSETTE ABC TRANSPORTER-RELATED"/>
    <property type="match status" value="1"/>
</dbReference>
<dbReference type="Pfam" id="PF07933">
    <property type="entry name" value="DUF1681"/>
    <property type="match status" value="1"/>
</dbReference>
<dbReference type="SUPFAM" id="SSF50729">
    <property type="entry name" value="PH domain-like"/>
    <property type="match status" value="1"/>
</dbReference>
<protein>
    <recommendedName>
        <fullName>Adaptin ear-binding coat-associated protein 1</fullName>
    </recommendedName>
    <alternativeName>
        <fullName>NECAP endocytosis-associated protein 1</fullName>
        <shortName>NECAP-1</shortName>
    </alternativeName>
</protein>
<comment type="function">
    <text evidence="1">Involved in endocytosis.</text>
</comment>
<comment type="subunit">
    <text evidence="1">Interacts with AP1G1 and AP2A1 components of the adapter protein complexes AP-1 and AP-2. Interacts with the GAE domain proteins GGA1, GGA2 and GGA3 (By similarity).</text>
</comment>
<comment type="subcellular location">
    <subcellularLocation>
        <location evidence="1">Cytoplasmic vesicle</location>
        <location evidence="1">Clathrin-coated vesicle membrane</location>
    </subcellularLocation>
    <subcellularLocation>
        <location evidence="1">Cell membrane</location>
    </subcellularLocation>
    <text evidence="1">Colocalizes with AP-2 at the plasma membrane.</text>
</comment>
<comment type="domain">
    <text evidence="1">The WXXF motifs mediate binding of accessory proteins to the ear-domain of AP-1, GGAs and AP-2 through hydrophobic interactions. Selective binding to the GAE domains of AP-1 or to the alpha-ear domain of AP-2 is tuned by the acidic context surrounding the motif and the properties of the second residue of the motif itself. The WXXF motif 1, which is preceded by an acidic residue and has a glycine in second position mediates specific interaction with AP-1. The WXXF motif 2, which is followed by the C-terminal carboxyl group negative charge, allows specific interaction with AP-2 (By similarity).</text>
</comment>
<comment type="similarity">
    <text evidence="4">Belongs to the NECAP family.</text>
</comment>
<sequence length="275" mass="29597">MASELEYESVLCVKPDVSVYRIPPRASNRGYRASDWKLDQPDWTGRLRITSKGKVAYIKLEDKVSGELFAQAPVEQYPGIAVETVTDSSRYFVIRIQDGTGRSAFIGIGFSDRGDAFDFNVSLQDHFKWVKQESEISKESQEMDSRPKLDLGFKEGQTIKLSIGNITTKKGGTSKPKTAGTGGLSLLPPPPGGKVTIPPPSSSVAISNHVTPPPIPKSNHGGSDADILLDLDSPAPITTPAPAPVSASNDLWGDFSTASSSVPNQAPQPSNWVQF</sequence>
<accession>Q3T093</accession>
<accession>A5PKA6</accession>
<evidence type="ECO:0000250" key="1"/>
<evidence type="ECO:0000250" key="2">
    <source>
        <dbReference type="UniProtKB" id="Q8NC96"/>
    </source>
</evidence>
<evidence type="ECO:0000256" key="3">
    <source>
        <dbReference type="SAM" id="MobiDB-lite"/>
    </source>
</evidence>
<evidence type="ECO:0000305" key="4"/>
<keyword id="KW-1003">Cell membrane</keyword>
<keyword id="KW-0968">Cytoplasmic vesicle</keyword>
<keyword id="KW-0254">Endocytosis</keyword>
<keyword id="KW-0472">Membrane</keyword>
<keyword id="KW-0597">Phosphoprotein</keyword>
<keyword id="KW-0653">Protein transport</keyword>
<keyword id="KW-1185">Reference proteome</keyword>
<keyword id="KW-0677">Repeat</keyword>
<keyword id="KW-0813">Transport</keyword>